<accession>B0K5Z9</accession>
<feature type="chain" id="PRO_1000093242" description="Phosphomethylpyrimidine synthase">
    <location>
        <begin position="1"/>
        <end position="432"/>
    </location>
</feature>
<feature type="binding site" evidence="1">
    <location>
        <position position="66"/>
    </location>
    <ligand>
        <name>substrate</name>
    </ligand>
</feature>
<feature type="binding site" evidence="1">
    <location>
        <position position="95"/>
    </location>
    <ligand>
        <name>substrate</name>
    </ligand>
</feature>
<feature type="binding site" evidence="1">
    <location>
        <position position="124"/>
    </location>
    <ligand>
        <name>substrate</name>
    </ligand>
</feature>
<feature type="binding site" evidence="1">
    <location>
        <position position="163"/>
    </location>
    <ligand>
        <name>substrate</name>
    </ligand>
</feature>
<feature type="binding site" evidence="1">
    <location>
        <begin position="185"/>
        <end position="187"/>
    </location>
    <ligand>
        <name>substrate</name>
    </ligand>
</feature>
<feature type="binding site" evidence="1">
    <location>
        <begin position="226"/>
        <end position="229"/>
    </location>
    <ligand>
        <name>substrate</name>
    </ligand>
</feature>
<feature type="binding site" evidence="1">
    <location>
        <position position="265"/>
    </location>
    <ligand>
        <name>substrate</name>
    </ligand>
</feature>
<feature type="binding site" evidence="1">
    <location>
        <position position="269"/>
    </location>
    <ligand>
        <name>Zn(2+)</name>
        <dbReference type="ChEBI" id="CHEBI:29105"/>
    </ligand>
</feature>
<feature type="binding site" evidence="1">
    <location>
        <position position="292"/>
    </location>
    <ligand>
        <name>substrate</name>
    </ligand>
</feature>
<feature type="binding site" evidence="1">
    <location>
        <position position="333"/>
    </location>
    <ligand>
        <name>Zn(2+)</name>
        <dbReference type="ChEBI" id="CHEBI:29105"/>
    </ligand>
</feature>
<feature type="binding site" evidence="1">
    <location>
        <position position="409"/>
    </location>
    <ligand>
        <name>[4Fe-4S] cluster</name>
        <dbReference type="ChEBI" id="CHEBI:49883"/>
        <note>4Fe-4S-S-AdoMet</note>
    </ligand>
</feature>
<feature type="binding site" evidence="1">
    <location>
        <position position="412"/>
    </location>
    <ligand>
        <name>[4Fe-4S] cluster</name>
        <dbReference type="ChEBI" id="CHEBI:49883"/>
        <note>4Fe-4S-S-AdoMet</note>
    </ligand>
</feature>
<feature type="binding site" evidence="1">
    <location>
        <position position="416"/>
    </location>
    <ligand>
        <name>[4Fe-4S] cluster</name>
        <dbReference type="ChEBI" id="CHEBI:49883"/>
        <note>4Fe-4S-S-AdoMet</note>
    </ligand>
</feature>
<keyword id="KW-0004">4Fe-4S</keyword>
<keyword id="KW-0408">Iron</keyword>
<keyword id="KW-0411">Iron-sulfur</keyword>
<keyword id="KW-0456">Lyase</keyword>
<keyword id="KW-0479">Metal-binding</keyword>
<keyword id="KW-0949">S-adenosyl-L-methionine</keyword>
<keyword id="KW-0784">Thiamine biosynthesis</keyword>
<keyword id="KW-0862">Zinc</keyword>
<comment type="function">
    <text evidence="1">Catalyzes the synthesis of the hydroxymethylpyrimidine phosphate (HMP-P) moiety of thiamine from aminoimidazole ribotide (AIR) in a radical S-adenosyl-L-methionine (SAM)-dependent reaction.</text>
</comment>
<comment type="catalytic activity">
    <reaction evidence="1">
        <text>5-amino-1-(5-phospho-beta-D-ribosyl)imidazole + S-adenosyl-L-methionine = 4-amino-2-methyl-5-(phosphooxymethyl)pyrimidine + CO + 5'-deoxyadenosine + formate + L-methionine + 3 H(+)</text>
        <dbReference type="Rhea" id="RHEA:24840"/>
        <dbReference type="ChEBI" id="CHEBI:15378"/>
        <dbReference type="ChEBI" id="CHEBI:15740"/>
        <dbReference type="ChEBI" id="CHEBI:17245"/>
        <dbReference type="ChEBI" id="CHEBI:17319"/>
        <dbReference type="ChEBI" id="CHEBI:57844"/>
        <dbReference type="ChEBI" id="CHEBI:58354"/>
        <dbReference type="ChEBI" id="CHEBI:59789"/>
        <dbReference type="ChEBI" id="CHEBI:137981"/>
        <dbReference type="EC" id="4.1.99.17"/>
    </reaction>
</comment>
<comment type="cofactor">
    <cofactor evidence="1">
        <name>[4Fe-4S] cluster</name>
        <dbReference type="ChEBI" id="CHEBI:49883"/>
    </cofactor>
    <text evidence="1">Binds 1 [4Fe-4S] cluster per subunit. The cluster is coordinated with 3 cysteines and an exchangeable S-adenosyl-L-methionine.</text>
</comment>
<comment type="pathway">
    <text evidence="1">Cofactor biosynthesis; thiamine diphosphate biosynthesis.</text>
</comment>
<comment type="similarity">
    <text evidence="1">Belongs to the ThiC family.</text>
</comment>
<proteinExistence type="inferred from homology"/>
<sequence>MTQLEYALSGIVTKEMRIVAEYEGVDEEFILEGVKKGEIVIPSNINHKNLIPKGIGRGLSTKVNANIGTSDAYPEIEKEIEKLNVAVKAGADAVMDLSTGGDINQSRRKILENSPVPVGTVPMYQAAVESISKYGSIVAMPEEFIFEVIEEQAKDGVDFITVHCGLTFESLKKLKDNGRVMDIVSRGGSFTIAWMLHNDKENPLYKHFDRLLDIAKKYDITLSLGDGLRPGCLEDATDSAQIQELIILGELVKRARKAGVQVMVEGPGHVPIDQIEANVKLQKQLCHNAPFYVLGPIVTDIAPGYDHITSAIGGAIAAASGADFLCYVTPAEHLGLPDKEDVKEGVIAAKIAAHAADIAKGVKGAKEKDLTMARARKALNWDEQIKLSIDPDKAFKYRINKNISTAKTCSMCGKFCAMKIVSEYLGTSAMTC</sequence>
<gene>
    <name evidence="1" type="primary">thiC</name>
    <name type="ordered locus">Teth514_0974</name>
</gene>
<dbReference type="EC" id="4.1.99.17" evidence="1"/>
<dbReference type="EMBL" id="CP000923">
    <property type="protein sequence ID" value="ABY92275.1"/>
    <property type="molecule type" value="Genomic_DNA"/>
</dbReference>
<dbReference type="RefSeq" id="WP_009052803.1">
    <property type="nucleotide sequence ID" value="NC_010320.1"/>
</dbReference>
<dbReference type="SMR" id="B0K5Z9"/>
<dbReference type="KEGG" id="tex:Teth514_0974"/>
<dbReference type="HOGENOM" id="CLU_013181_2_2_9"/>
<dbReference type="UniPathway" id="UPA00060"/>
<dbReference type="Proteomes" id="UP000002155">
    <property type="component" value="Chromosome"/>
</dbReference>
<dbReference type="GO" id="GO:0051539">
    <property type="term" value="F:4 iron, 4 sulfur cluster binding"/>
    <property type="evidence" value="ECO:0007669"/>
    <property type="project" value="UniProtKB-KW"/>
</dbReference>
<dbReference type="GO" id="GO:0016830">
    <property type="term" value="F:carbon-carbon lyase activity"/>
    <property type="evidence" value="ECO:0007669"/>
    <property type="project" value="InterPro"/>
</dbReference>
<dbReference type="GO" id="GO:0008270">
    <property type="term" value="F:zinc ion binding"/>
    <property type="evidence" value="ECO:0007669"/>
    <property type="project" value="UniProtKB-UniRule"/>
</dbReference>
<dbReference type="GO" id="GO:0009228">
    <property type="term" value="P:thiamine biosynthetic process"/>
    <property type="evidence" value="ECO:0007669"/>
    <property type="project" value="UniProtKB-KW"/>
</dbReference>
<dbReference type="GO" id="GO:0009229">
    <property type="term" value="P:thiamine diphosphate biosynthetic process"/>
    <property type="evidence" value="ECO:0007669"/>
    <property type="project" value="UniProtKB-UniRule"/>
</dbReference>
<dbReference type="FunFam" id="3.20.20.540:FF:000001">
    <property type="entry name" value="Phosphomethylpyrimidine synthase"/>
    <property type="match status" value="1"/>
</dbReference>
<dbReference type="Gene3D" id="6.10.250.620">
    <property type="match status" value="1"/>
</dbReference>
<dbReference type="Gene3D" id="3.20.20.540">
    <property type="entry name" value="Radical SAM ThiC family, central domain"/>
    <property type="match status" value="1"/>
</dbReference>
<dbReference type="HAMAP" id="MF_00089">
    <property type="entry name" value="ThiC"/>
    <property type="match status" value="1"/>
</dbReference>
<dbReference type="InterPro" id="IPR037509">
    <property type="entry name" value="ThiC"/>
</dbReference>
<dbReference type="InterPro" id="IPR038521">
    <property type="entry name" value="ThiC/Bza_core_dom"/>
</dbReference>
<dbReference type="InterPro" id="IPR002817">
    <property type="entry name" value="ThiC/BzaA/B"/>
</dbReference>
<dbReference type="NCBIfam" id="NF009895">
    <property type="entry name" value="PRK13352.1"/>
    <property type="match status" value="1"/>
</dbReference>
<dbReference type="NCBIfam" id="TIGR00190">
    <property type="entry name" value="thiC"/>
    <property type="match status" value="1"/>
</dbReference>
<dbReference type="PANTHER" id="PTHR30557:SF1">
    <property type="entry name" value="PHOSPHOMETHYLPYRIMIDINE SYNTHASE, CHLOROPLASTIC"/>
    <property type="match status" value="1"/>
</dbReference>
<dbReference type="PANTHER" id="PTHR30557">
    <property type="entry name" value="THIAMINE BIOSYNTHESIS PROTEIN THIC"/>
    <property type="match status" value="1"/>
</dbReference>
<dbReference type="Pfam" id="PF01964">
    <property type="entry name" value="ThiC_Rad_SAM"/>
    <property type="match status" value="1"/>
</dbReference>
<dbReference type="SFLD" id="SFLDF00407">
    <property type="entry name" value="phosphomethylpyrimidine_syntha"/>
    <property type="match status" value="1"/>
</dbReference>
<dbReference type="SFLD" id="SFLDG01114">
    <property type="entry name" value="phosphomethylpyrimidine_syntha"/>
    <property type="match status" value="1"/>
</dbReference>
<dbReference type="SFLD" id="SFLDS00113">
    <property type="entry name" value="Radical_SAM_Phosphomethylpyrim"/>
    <property type="match status" value="1"/>
</dbReference>
<name>THIC_THEPX</name>
<reference key="1">
    <citation type="submission" date="2008-01" db="EMBL/GenBank/DDBJ databases">
        <title>Complete sequence of Thermoanaerobacter sp. X514.</title>
        <authorList>
            <consortium name="US DOE Joint Genome Institute"/>
            <person name="Copeland A."/>
            <person name="Lucas S."/>
            <person name="Lapidus A."/>
            <person name="Barry K."/>
            <person name="Glavina del Rio T."/>
            <person name="Dalin E."/>
            <person name="Tice H."/>
            <person name="Pitluck S."/>
            <person name="Bruce D."/>
            <person name="Goodwin L."/>
            <person name="Saunders E."/>
            <person name="Brettin T."/>
            <person name="Detter J.C."/>
            <person name="Han C."/>
            <person name="Schmutz J."/>
            <person name="Larimer F."/>
            <person name="Land M."/>
            <person name="Hauser L."/>
            <person name="Kyrpides N."/>
            <person name="Kim E."/>
            <person name="Hemme C."/>
            <person name="Fields M.W."/>
            <person name="He Z."/>
            <person name="Zhou J."/>
            <person name="Richardson P."/>
        </authorList>
    </citation>
    <scope>NUCLEOTIDE SEQUENCE [LARGE SCALE GENOMIC DNA]</scope>
    <source>
        <strain>X514</strain>
    </source>
</reference>
<organism>
    <name type="scientific">Thermoanaerobacter sp. (strain X514)</name>
    <dbReference type="NCBI Taxonomy" id="399726"/>
    <lineage>
        <taxon>Bacteria</taxon>
        <taxon>Bacillati</taxon>
        <taxon>Bacillota</taxon>
        <taxon>Clostridia</taxon>
        <taxon>Thermoanaerobacterales</taxon>
        <taxon>Thermoanaerobacteraceae</taxon>
        <taxon>Thermoanaerobacter</taxon>
    </lineage>
</organism>
<protein>
    <recommendedName>
        <fullName evidence="1">Phosphomethylpyrimidine synthase</fullName>
        <ecNumber evidence="1">4.1.99.17</ecNumber>
    </recommendedName>
    <alternativeName>
        <fullName evidence="1">Hydroxymethylpyrimidine phosphate synthase</fullName>
        <shortName evidence="1">HMP-P synthase</shortName>
        <shortName evidence="1">HMP-phosphate synthase</shortName>
        <shortName evidence="1">HMPP synthase</shortName>
    </alternativeName>
    <alternativeName>
        <fullName evidence="1">Thiamine biosynthesis protein ThiC</fullName>
    </alternativeName>
</protein>
<evidence type="ECO:0000255" key="1">
    <source>
        <dbReference type="HAMAP-Rule" id="MF_00089"/>
    </source>
</evidence>